<sequence>MALPIIIDCDPGHDDAIALVLSLASPELEVKAITSSAGNQTPEKTLRNVLRMLTLLKRPDIPVAGGAVKPLMRELIIADNVHGESGLDGPALPEPSFAPQSGTAVELMAKTLRESSQPVTIVSTGPQTNVALLLNSHPELHTKIARIVIMGGAMGLGNWTPAAEFNIYVDPEAAEIVFQSGIPVVMAGLDVTHKAQIHAADIERFRAIGNPISTIVAELLDFFMEYHKDEKWGFVGAPLHDPCTIAWLLKPEIFTTVERWVGVETQGKYTQGMTVVDYYFLTGNKPNATVMVDVDRQGFVDLLAERLQYYA</sequence>
<keyword id="KW-0326">Glycosidase</keyword>
<keyword id="KW-0378">Hydrolase</keyword>
<name>RIHA_SALDC</name>
<proteinExistence type="inferred from homology"/>
<evidence type="ECO:0000255" key="1">
    <source>
        <dbReference type="HAMAP-Rule" id="MF_01431"/>
    </source>
</evidence>
<protein>
    <recommendedName>
        <fullName evidence="1">Pyrimidine-specific ribonucleoside hydrolase RihA</fullName>
        <ecNumber evidence="1">3.2.-.-</ecNumber>
    </recommendedName>
    <alternativeName>
        <fullName evidence="1">Cytidine/uridine-specific hydrolase</fullName>
    </alternativeName>
</protein>
<feature type="chain" id="PRO_1000145799" description="Pyrimidine-specific ribonucleoside hydrolase RihA">
    <location>
        <begin position="1"/>
        <end position="311"/>
    </location>
</feature>
<feature type="active site" evidence="1">
    <location>
        <position position="240"/>
    </location>
</feature>
<comment type="function">
    <text evidence="1">Hydrolyzes cytidine or uridine to ribose and cytosine or uracil, respectively.</text>
</comment>
<comment type="similarity">
    <text evidence="1">Belongs to the IUNH family. RihA subfamily.</text>
</comment>
<dbReference type="EC" id="3.2.-.-" evidence="1"/>
<dbReference type="EMBL" id="CP001144">
    <property type="protein sequence ID" value="ACH76875.1"/>
    <property type="molecule type" value="Genomic_DNA"/>
</dbReference>
<dbReference type="RefSeq" id="WP_001207442.1">
    <property type="nucleotide sequence ID" value="NC_011205.1"/>
</dbReference>
<dbReference type="SMR" id="B5FNA2"/>
<dbReference type="KEGG" id="sed:SeD_A0765"/>
<dbReference type="HOGENOM" id="CLU_036838_2_0_6"/>
<dbReference type="Proteomes" id="UP000008322">
    <property type="component" value="Chromosome"/>
</dbReference>
<dbReference type="GO" id="GO:0005829">
    <property type="term" value="C:cytosol"/>
    <property type="evidence" value="ECO:0007669"/>
    <property type="project" value="TreeGrafter"/>
</dbReference>
<dbReference type="GO" id="GO:0008477">
    <property type="term" value="F:purine nucleosidase activity"/>
    <property type="evidence" value="ECO:0007669"/>
    <property type="project" value="TreeGrafter"/>
</dbReference>
<dbReference type="GO" id="GO:0045437">
    <property type="term" value="F:uridine nucleosidase activity"/>
    <property type="evidence" value="ECO:0007669"/>
    <property type="project" value="InterPro"/>
</dbReference>
<dbReference type="GO" id="GO:0015949">
    <property type="term" value="P:nucleobase-containing small molecule interconversion"/>
    <property type="evidence" value="ECO:0007669"/>
    <property type="project" value="InterPro"/>
</dbReference>
<dbReference type="GO" id="GO:0006152">
    <property type="term" value="P:purine nucleoside catabolic process"/>
    <property type="evidence" value="ECO:0007669"/>
    <property type="project" value="TreeGrafter"/>
</dbReference>
<dbReference type="GO" id="GO:0006206">
    <property type="term" value="P:pyrimidine nucleobase metabolic process"/>
    <property type="evidence" value="ECO:0007669"/>
    <property type="project" value="UniProtKB-UniRule"/>
</dbReference>
<dbReference type="CDD" id="cd02651">
    <property type="entry name" value="nuc_hydro_IU_UC_XIUA"/>
    <property type="match status" value="1"/>
</dbReference>
<dbReference type="FunFam" id="3.90.245.10:FF:000001">
    <property type="entry name" value="Pyrimidine-specific ribonucleoside hydrolase RihA"/>
    <property type="match status" value="1"/>
</dbReference>
<dbReference type="Gene3D" id="3.90.245.10">
    <property type="entry name" value="Ribonucleoside hydrolase-like"/>
    <property type="match status" value="1"/>
</dbReference>
<dbReference type="HAMAP" id="MF_01431">
    <property type="entry name" value="Pyrim_hydro_RihA"/>
    <property type="match status" value="1"/>
</dbReference>
<dbReference type="InterPro" id="IPR015910">
    <property type="entry name" value="I/U_nuclsd_hydro_CS"/>
</dbReference>
<dbReference type="InterPro" id="IPR001910">
    <property type="entry name" value="Inosine/uridine_hydrolase_dom"/>
</dbReference>
<dbReference type="InterPro" id="IPR023186">
    <property type="entry name" value="IUNH"/>
</dbReference>
<dbReference type="InterPro" id="IPR022975">
    <property type="entry name" value="Pyrim_hydro_RihA"/>
</dbReference>
<dbReference type="InterPro" id="IPR036452">
    <property type="entry name" value="Ribo_hydro-like"/>
</dbReference>
<dbReference type="NCBIfam" id="NF007761">
    <property type="entry name" value="PRK10443.1"/>
    <property type="match status" value="1"/>
</dbReference>
<dbReference type="PANTHER" id="PTHR12304">
    <property type="entry name" value="INOSINE-URIDINE PREFERRING NUCLEOSIDE HYDROLASE"/>
    <property type="match status" value="1"/>
</dbReference>
<dbReference type="PANTHER" id="PTHR12304:SF4">
    <property type="entry name" value="URIDINE NUCLEOSIDASE"/>
    <property type="match status" value="1"/>
</dbReference>
<dbReference type="Pfam" id="PF01156">
    <property type="entry name" value="IU_nuc_hydro"/>
    <property type="match status" value="1"/>
</dbReference>
<dbReference type="SUPFAM" id="SSF53590">
    <property type="entry name" value="Nucleoside hydrolase"/>
    <property type="match status" value="1"/>
</dbReference>
<dbReference type="PROSITE" id="PS01247">
    <property type="entry name" value="IUNH"/>
    <property type="match status" value="1"/>
</dbReference>
<reference key="1">
    <citation type="journal article" date="2011" name="J. Bacteriol.">
        <title>Comparative genomics of 28 Salmonella enterica isolates: evidence for CRISPR-mediated adaptive sublineage evolution.</title>
        <authorList>
            <person name="Fricke W.F."/>
            <person name="Mammel M.K."/>
            <person name="McDermott P.F."/>
            <person name="Tartera C."/>
            <person name="White D.G."/>
            <person name="Leclerc J.E."/>
            <person name="Ravel J."/>
            <person name="Cebula T.A."/>
        </authorList>
    </citation>
    <scope>NUCLEOTIDE SEQUENCE [LARGE SCALE GENOMIC DNA]</scope>
    <source>
        <strain>CT_02021853</strain>
    </source>
</reference>
<organism>
    <name type="scientific">Salmonella dublin (strain CT_02021853)</name>
    <dbReference type="NCBI Taxonomy" id="439851"/>
    <lineage>
        <taxon>Bacteria</taxon>
        <taxon>Pseudomonadati</taxon>
        <taxon>Pseudomonadota</taxon>
        <taxon>Gammaproteobacteria</taxon>
        <taxon>Enterobacterales</taxon>
        <taxon>Enterobacteriaceae</taxon>
        <taxon>Salmonella</taxon>
    </lineage>
</organism>
<gene>
    <name evidence="1" type="primary">rihA</name>
    <name type="ordered locus">SeD_A0765</name>
</gene>
<accession>B5FNA2</accession>